<evidence type="ECO:0000250" key="1">
    <source>
        <dbReference type="UniProtKB" id="P84531"/>
    </source>
</evidence>
<evidence type="ECO:0000269" key="2">
    <source>
    </source>
</evidence>
<evidence type="ECO:0000269" key="3">
    <source>
    </source>
</evidence>
<evidence type="ECO:0000269" key="4">
    <source>
    </source>
</evidence>
<evidence type="ECO:0000269" key="5">
    <source>
    </source>
</evidence>
<evidence type="ECO:0000303" key="6">
    <source>
    </source>
</evidence>
<evidence type="ECO:0000303" key="7">
    <source>
    </source>
</evidence>
<evidence type="ECO:0000303" key="8">
    <source>
    </source>
</evidence>
<evidence type="ECO:0000305" key="9"/>
<evidence type="ECO:0007744" key="10">
    <source>
        <dbReference type="PDB" id="1LLN"/>
    </source>
</evidence>
<evidence type="ECO:0007829" key="11">
    <source>
        <dbReference type="PDB" id="1LLN"/>
    </source>
</evidence>
<accession>Q40772</accession>
<feature type="signal peptide" evidence="4">
    <location>
        <begin position="1"/>
        <end position="25"/>
    </location>
</feature>
<feature type="chain" id="PRO_0000030783" description="Antiviral protein II/III">
    <location>
        <begin position="26"/>
        <end status="unknown"/>
    </location>
</feature>
<feature type="propeptide" id="PRO_0000030784">
    <location>
        <begin status="unknown"/>
        <end position="310"/>
    </location>
</feature>
<feature type="active site" evidence="1">
    <location>
        <position position="94"/>
    </location>
</feature>
<feature type="active site" evidence="1">
    <location>
        <position position="142"/>
    </location>
</feature>
<feature type="active site" evidence="1">
    <location>
        <position position="197"/>
    </location>
</feature>
<feature type="active site" evidence="1">
    <location>
        <position position="200"/>
    </location>
</feature>
<feature type="disulfide bond" evidence="3 10">
    <location>
        <begin position="57"/>
        <end position="284"/>
    </location>
</feature>
<feature type="disulfide bond" evidence="3 10">
    <location>
        <begin position="106"/>
        <end position="123"/>
    </location>
</feature>
<feature type="strand" evidence="11">
    <location>
        <begin position="27"/>
        <end position="31"/>
    </location>
</feature>
<feature type="helix" evidence="11">
    <location>
        <begin position="36"/>
        <end position="50"/>
    </location>
</feature>
<feature type="strand" evidence="11">
    <location>
        <begin position="60"/>
        <end position="62"/>
    </location>
</feature>
<feature type="strand" evidence="11">
    <location>
        <begin position="66"/>
        <end position="69"/>
    </location>
</feature>
<feature type="strand" evidence="11">
    <location>
        <begin position="72"/>
        <end position="78"/>
    </location>
</feature>
<feature type="strand" evidence="11">
    <location>
        <begin position="84"/>
        <end position="89"/>
    </location>
</feature>
<feature type="turn" evidence="11">
    <location>
        <begin position="90"/>
        <end position="92"/>
    </location>
</feature>
<feature type="strand" evidence="11">
    <location>
        <begin position="95"/>
        <end position="102"/>
    </location>
</feature>
<feature type="strand" evidence="11">
    <location>
        <begin position="105"/>
        <end position="110"/>
    </location>
</feature>
<feature type="helix" evidence="11">
    <location>
        <begin position="118"/>
        <end position="122"/>
    </location>
</feature>
<feature type="turn" evidence="11">
    <location>
        <begin position="123"/>
        <end position="125"/>
    </location>
</feature>
<feature type="turn" evidence="11">
    <location>
        <begin position="132"/>
        <end position="134"/>
    </location>
</feature>
<feature type="helix" evidence="11">
    <location>
        <begin position="142"/>
        <end position="149"/>
    </location>
</feature>
<feature type="helix" evidence="11">
    <location>
        <begin position="152"/>
        <end position="154"/>
    </location>
</feature>
<feature type="helix" evidence="11">
    <location>
        <begin position="161"/>
        <end position="167"/>
    </location>
</feature>
<feature type="turn" evidence="11">
    <location>
        <begin position="177"/>
        <end position="179"/>
    </location>
</feature>
<feature type="helix" evidence="11">
    <location>
        <begin position="180"/>
        <end position="200"/>
    </location>
</feature>
<feature type="turn" evidence="11">
    <location>
        <begin position="204"/>
        <end position="206"/>
    </location>
</feature>
<feature type="helix" evidence="11">
    <location>
        <begin position="225"/>
        <end position="228"/>
    </location>
</feature>
<feature type="helix" evidence="11">
    <location>
        <begin position="231"/>
        <end position="235"/>
    </location>
</feature>
<feature type="turn" evidence="11">
    <location>
        <begin position="238"/>
        <end position="240"/>
    </location>
</feature>
<feature type="strand" evidence="11">
    <location>
        <begin position="248"/>
        <end position="250"/>
    </location>
</feature>
<feature type="strand" evidence="11">
    <location>
        <begin position="265"/>
        <end position="267"/>
    </location>
</feature>
<feature type="helix" evidence="11">
    <location>
        <begin position="268"/>
        <end position="273"/>
    </location>
</feature>
<feature type="strand" evidence="11">
    <location>
        <begin position="276"/>
        <end position="279"/>
    </location>
</feature>
<sequence length="310" mass="34694">MKMKVLEVVGLAISIWLMLTPPASSNIVFDVENATPETYSNFLTSLREAVKDKKLTCHGMIMATTLTEQPKYVLVDLKFGSGTFTLAIRRGNLYLEGYSDIYNGKCRYRIFKDSESDAQETVCPGDKSKPGTQNNIPYEKSYKGMESKGGARTKLGLGKITLKSRMGKIYGKDATDQKQYQKNEAEFLLIAVQMVTEASRFKYIENKVKAKFDDANGYQPDPKAISLEKNWDSVSKVIAKVGTSGDSTVTLPGDLKDENNKPWTTATMNDLKNDIMALLTHVTCKVKSSMFPEIMSYYYRTSISNLGEFE</sequence>
<dbReference type="EC" id="3.2.2.22" evidence="2"/>
<dbReference type="EMBL" id="X78628">
    <property type="protein sequence ID" value="CAA55342.1"/>
    <property type="molecule type" value="mRNA"/>
</dbReference>
<dbReference type="PIR" id="S32610">
    <property type="entry name" value="S32610"/>
</dbReference>
<dbReference type="PIR" id="S46239">
    <property type="entry name" value="S46239"/>
</dbReference>
<dbReference type="PDB" id="1LLN">
    <property type="method" value="X-ray"/>
    <property type="resolution" value="1.60 A"/>
    <property type="chains" value="A=26-287"/>
</dbReference>
<dbReference type="PDBsum" id="1LLN"/>
<dbReference type="SMR" id="Q40772"/>
<dbReference type="IntAct" id="Q40772">
    <property type="interactions" value="1"/>
</dbReference>
<dbReference type="MINT" id="Q40772"/>
<dbReference type="BRENDA" id="3.2.2.22">
    <property type="organism ID" value="4806"/>
</dbReference>
<dbReference type="EvolutionaryTrace" id="Q40772"/>
<dbReference type="GO" id="GO:0030598">
    <property type="term" value="F:rRNA N-glycosylase activity"/>
    <property type="evidence" value="ECO:0007669"/>
    <property type="project" value="UniProtKB-EC"/>
</dbReference>
<dbReference type="GO" id="GO:0090729">
    <property type="term" value="F:toxin activity"/>
    <property type="evidence" value="ECO:0007669"/>
    <property type="project" value="UniProtKB-KW"/>
</dbReference>
<dbReference type="GO" id="GO:0051607">
    <property type="term" value="P:defense response to virus"/>
    <property type="evidence" value="ECO:0007669"/>
    <property type="project" value="UniProtKB-KW"/>
</dbReference>
<dbReference type="GO" id="GO:0017148">
    <property type="term" value="P:negative regulation of translation"/>
    <property type="evidence" value="ECO:0007669"/>
    <property type="project" value="UniProtKB-KW"/>
</dbReference>
<dbReference type="Gene3D" id="3.40.420.10">
    <property type="entry name" value="Ricin (A subunit), domain 1"/>
    <property type="match status" value="1"/>
</dbReference>
<dbReference type="Gene3D" id="4.10.470.10">
    <property type="entry name" value="Ricin (A Subunit), domain 2"/>
    <property type="match status" value="1"/>
</dbReference>
<dbReference type="InterPro" id="IPR036041">
    <property type="entry name" value="Ribosome-inact_prot_sf"/>
</dbReference>
<dbReference type="InterPro" id="IPR017989">
    <property type="entry name" value="Ribosome_inactivat_1/2"/>
</dbReference>
<dbReference type="InterPro" id="IPR001574">
    <property type="entry name" value="Ribosome_inactivat_prot"/>
</dbReference>
<dbReference type="InterPro" id="IPR017988">
    <property type="entry name" value="Ribosome_inactivat_prot_CS"/>
</dbReference>
<dbReference type="InterPro" id="IPR016138">
    <property type="entry name" value="Ribosome_inactivat_prot_sub1"/>
</dbReference>
<dbReference type="InterPro" id="IPR016139">
    <property type="entry name" value="Ribosome_inactivat_prot_sub2"/>
</dbReference>
<dbReference type="PANTHER" id="PTHR33453">
    <property type="match status" value="1"/>
</dbReference>
<dbReference type="PANTHER" id="PTHR33453:SF34">
    <property type="entry name" value="RIBOSOME-INACTIVATING PROTEIN"/>
    <property type="match status" value="1"/>
</dbReference>
<dbReference type="Pfam" id="PF00161">
    <property type="entry name" value="RIP"/>
    <property type="match status" value="1"/>
</dbReference>
<dbReference type="PRINTS" id="PR00396">
    <property type="entry name" value="SHIGARICIN"/>
</dbReference>
<dbReference type="SUPFAM" id="SSF56371">
    <property type="entry name" value="Ribosome inactivating proteins (RIP)"/>
    <property type="match status" value="1"/>
</dbReference>
<dbReference type="PROSITE" id="PS00275">
    <property type="entry name" value="SHIGA_RICIN"/>
    <property type="match status" value="1"/>
</dbReference>
<gene>
    <name type="primary">PAP2</name>
    <name type="synonym">PAPII</name>
</gene>
<reference key="1">
    <citation type="journal article" date="1994" name="FEBS Lett.">
        <title>Isolation and characterization of a cDNA clone encoding the pokeweed antiviral protein II from Phytolacca americana and its expression in E. coli.</title>
        <authorList>
            <person name="Poyet J.-L."/>
            <person name="Radom J."/>
            <person name="Hoeveler A."/>
        </authorList>
    </citation>
    <scope>NUCLEOTIDE SEQUENCE [MRNA]</scope>
    <scope>FUNCTION</scope>
    <source>
        <tissue evidence="8">Leaf</tissue>
    </source>
</reference>
<reference key="2">
    <citation type="journal article" date="1984" name="Biochim. Biophys. Acta">
        <title>Characterization of translational inhibitors from Phytolacca americana. Amino-terminal sequence determination and antibody-inhibitor conjugates.</title>
        <authorList>
            <person name="Bjorn M.J."/>
            <person name="Larrick J."/>
            <person name="Piatak M."/>
            <person name="Wilson K.J."/>
        </authorList>
    </citation>
    <scope>PROTEIN SEQUENCE OF 26-55</scope>
    <source>
        <tissue>Leaf</tissue>
    </source>
</reference>
<reference key="3">
    <citation type="journal article" date="1999" name="Biochem. Biophys. Res. Commun.">
        <title>Pokeweed antiviral protein isoforms PAP-I, PAP-II, and PAP-III depurinate RNA of human immunodeficiency virus (HIV)-1.</title>
        <authorList>
            <person name="Rajamohan F."/>
            <person name="Venkatachalam T.K."/>
            <person name="Irvin J.D."/>
            <person name="Uckun F.M."/>
        </authorList>
    </citation>
    <scope>FUNCTION</scope>
    <scope>CATALYTIC ACTIVITY</scope>
    <scope>TISSUE SPECIFICITY</scope>
    <scope>MISCELLANEOUS</scope>
</reference>
<reference evidence="10" key="4">
    <citation type="journal article" date="2003" name="Biochem. Pharmacol.">
        <title>High resolution X-ray structure of potent anti-HIV pokeweed antiviral protein-III.</title>
        <authorList>
            <person name="Kurinov I.V."/>
            <person name="Uckun F.M."/>
        </authorList>
    </citation>
    <scope>X-RAY CRYSTALLOGRAPHY (1.6 ANGSTROMS) OF 26-287 OF PAP-III</scope>
    <scope>TISSUE SPECIFICITY</scope>
    <scope>DISULFIDE BONDS</scope>
    <scope>REACTION MECHANISM</scope>
</reference>
<name>RIP2_PHYAM</name>
<keyword id="KW-0002">3D-structure</keyword>
<keyword id="KW-0051">Antiviral defense</keyword>
<keyword id="KW-0903">Direct protein sequencing</keyword>
<keyword id="KW-1015">Disulfide bond</keyword>
<keyword id="KW-0378">Hydrolase</keyword>
<keyword id="KW-0611">Plant defense</keyword>
<keyword id="KW-0652">Protein synthesis inhibitor</keyword>
<keyword id="KW-0732">Signal</keyword>
<keyword id="KW-0800">Toxin</keyword>
<comment type="function">
    <text evidence="2 5">Possesses antiviral potency. Inhibits viral infection of plants (tobacco mosaic virus) (PubMed:10403789). Inhibits protein synthesis in both prokaryotes and eukaryotes (PubMed:10403789, PubMed:8034016).</text>
</comment>
<comment type="catalytic activity">
    <reaction evidence="2">
        <text>Endohydrolysis of the N-glycosidic bond at one specific adenosine on the 28S rRNA.</text>
        <dbReference type="EC" id="3.2.2.22"/>
    </reaction>
</comment>
<comment type="interaction">
    <interactant intactId="EBI-52361274">
        <id>Q40772</id>
    </interactant>
    <interactant intactId="EBI-12508070">
        <id>Q8IV20</id>
        <label>LACC1</label>
    </interactant>
    <organismsDiffer>true</organismsDiffer>
    <experiments>4</experiments>
</comment>
<comment type="tissue specificity">
    <text evidence="2 3">PAP-II is expressed in early summer leaves (at protein level) (PubMed:10403789). PAP-III is expressed in late summer leaves (at protein level) (PubMed:10403789, PubMed:12754107).</text>
</comment>
<comment type="developmental stage">
    <text>Expressed progressively with the aging of the plant.</text>
</comment>
<comment type="miscellaneous">
    <text evidence="2">2 forms exist, PAP-II and PAP-III, that differ in their seasonal expression and chromatographic profiles. Both depurinate genomic RNA of immunodeficiency virus type-I (HIV-I) and bacteriophage (MS 2) RNA. PAP-II and PAP-III inhibit the replication of HIV-1 in human peripheral blood mononuclear cells with IC(50) values of 26 nM and 17 nM, respectively.</text>
</comment>
<comment type="similarity">
    <text evidence="9">Belongs to the ribosome-inactivating protein family. Type 1 RIP subfamily.</text>
</comment>
<protein>
    <recommendedName>
        <fullName evidence="9">Antiviral protein II/III</fullName>
        <ecNumber evidence="2">3.2.2.22</ecNumber>
    </recommendedName>
    <alternativeName>
        <fullName evidence="6 8">Antiviral protein II</fullName>
    </alternativeName>
    <alternativeName>
        <fullName evidence="6 7">Antiviral protein III</fullName>
    </alternativeName>
    <alternativeName>
        <fullName evidence="6 8">PAP-II</fullName>
    </alternativeName>
    <alternativeName>
        <fullName evidence="6 7">PAP-III</fullName>
    </alternativeName>
    <alternativeName>
        <fullName>Ribosome-inactivating protein</fullName>
    </alternativeName>
    <alternativeName>
        <fullName>rRNA N-glycosidase</fullName>
    </alternativeName>
</protein>
<proteinExistence type="evidence at protein level"/>
<organism>
    <name type="scientific">Phytolacca americana</name>
    <name type="common">American pokeweed</name>
    <name type="synonym">Phytolacca decandra</name>
    <dbReference type="NCBI Taxonomy" id="3527"/>
    <lineage>
        <taxon>Eukaryota</taxon>
        <taxon>Viridiplantae</taxon>
        <taxon>Streptophyta</taxon>
        <taxon>Embryophyta</taxon>
        <taxon>Tracheophyta</taxon>
        <taxon>Spermatophyta</taxon>
        <taxon>Magnoliopsida</taxon>
        <taxon>eudicotyledons</taxon>
        <taxon>Gunneridae</taxon>
        <taxon>Pentapetalae</taxon>
        <taxon>Caryophyllales</taxon>
        <taxon>Phytolaccaceae</taxon>
        <taxon>Phytolacca</taxon>
    </lineage>
</organism>